<dbReference type="EMBL" id="Y09227">
    <property type="protein sequence ID" value="CAA70429.1"/>
    <property type="molecule type" value="Genomic_DNA"/>
</dbReference>
<dbReference type="EMBL" id="BC125629">
    <property type="protein sequence ID" value="AAI25630.1"/>
    <property type="molecule type" value="mRNA"/>
</dbReference>
<dbReference type="CCDS" id="CCDS17558.1"/>
<dbReference type="RefSeq" id="NP_001191356.1">
    <property type="nucleotide sequence ID" value="NM_001204427.1"/>
</dbReference>
<dbReference type="RefSeq" id="NP_035608.1">
    <property type="nucleotide sequence ID" value="NM_011478.2"/>
</dbReference>
<dbReference type="FunCoup" id="O09116">
    <property type="interactions" value="47"/>
</dbReference>
<dbReference type="STRING" id="10090.ENSMUSP00000056287"/>
<dbReference type="PhosphoSitePlus" id="O09116"/>
<dbReference type="PaxDb" id="10090-ENSMUSP00000056287"/>
<dbReference type="ProteomicsDB" id="257357"/>
<dbReference type="Antibodypedia" id="34110">
    <property type="antibodies" value="191 antibodies from 28 providers"/>
</dbReference>
<dbReference type="DNASU" id="20766"/>
<dbReference type="Ensembl" id="ENSMUST00000058142.4">
    <property type="protein sequence ID" value="ENSMUSP00000056287.4"/>
    <property type="gene ID" value="ENSMUSG00000045539.4"/>
</dbReference>
<dbReference type="GeneID" id="20766"/>
<dbReference type="KEGG" id="mmu:20766"/>
<dbReference type="UCSC" id="uc008qec.2">
    <property type="organism name" value="mouse"/>
</dbReference>
<dbReference type="AGR" id="MGI:1330237"/>
<dbReference type="CTD" id="6707"/>
<dbReference type="MGI" id="MGI:1330237">
    <property type="gene designation" value="Sprr3"/>
</dbReference>
<dbReference type="VEuPathDB" id="HostDB:ENSMUSG00000045539"/>
<dbReference type="eggNOG" id="ENOG502SDIP">
    <property type="taxonomic scope" value="Eukaryota"/>
</dbReference>
<dbReference type="GeneTree" id="ENSGT00940000164092"/>
<dbReference type="HOGENOM" id="CLU_101829_0_0_1"/>
<dbReference type="InParanoid" id="O09116"/>
<dbReference type="OMA" id="QVPEPCQ"/>
<dbReference type="OrthoDB" id="9623740at2759"/>
<dbReference type="PhylomeDB" id="O09116"/>
<dbReference type="TreeFam" id="TF338205"/>
<dbReference type="Reactome" id="R-MMU-6809371">
    <property type="pathway name" value="Formation of the cornified envelope"/>
</dbReference>
<dbReference type="BioGRID-ORCS" id="20766">
    <property type="hits" value="1 hit in 79 CRISPR screens"/>
</dbReference>
<dbReference type="PRO" id="PR:O09116"/>
<dbReference type="Proteomes" id="UP000000589">
    <property type="component" value="Chromosome 3"/>
</dbReference>
<dbReference type="RNAct" id="O09116">
    <property type="molecule type" value="protein"/>
</dbReference>
<dbReference type="Bgee" id="ENSMUSG00000045539">
    <property type="expression patterns" value="Expressed in superior surface of tongue and 34 other cell types or tissues"/>
</dbReference>
<dbReference type="GO" id="GO:0005737">
    <property type="term" value="C:cytoplasm"/>
    <property type="evidence" value="ECO:0007669"/>
    <property type="project" value="UniProtKB-SubCell"/>
</dbReference>
<dbReference type="GO" id="GO:0031424">
    <property type="term" value="P:keratinization"/>
    <property type="evidence" value="ECO:0007669"/>
    <property type="project" value="UniProtKB-KW"/>
</dbReference>
<dbReference type="Pfam" id="PF02389">
    <property type="entry name" value="Cornifin"/>
    <property type="match status" value="2"/>
</dbReference>
<dbReference type="PRINTS" id="PR00021">
    <property type="entry name" value="PRORICH"/>
</dbReference>
<reference key="1">
    <citation type="journal article" date="1998" name="J. Struct. Biol.">
        <title>Small proline-rich proteins are cross-bridging proteins in the cornified cell envelopes of stratified squamous epithelia.</title>
        <authorList>
            <person name="Steinert P.M."/>
            <person name="Candi E."/>
            <person name="Kartasova T."/>
            <person name="Marekov L."/>
        </authorList>
    </citation>
    <scope>NUCLEOTIDE SEQUENCE [GENOMIC DNA]</scope>
    <source>
        <strain>BALB/cJ</strain>
    </source>
</reference>
<reference key="2">
    <citation type="journal article" date="2004" name="Genome Res.">
        <title>The status, quality, and expansion of the NIH full-length cDNA project: the Mammalian Gene Collection (MGC).</title>
        <authorList>
            <consortium name="The MGC Project Team"/>
        </authorList>
    </citation>
    <scope>NUCLEOTIDE SEQUENCE [LARGE SCALE MRNA]</scope>
    <source>
        <tissue>Brain</tissue>
    </source>
</reference>
<name>SPRR3_MOUSE</name>
<evidence type="ECO:0000250" key="1">
    <source>
        <dbReference type="UniProtKB" id="Q9UBC9"/>
    </source>
</evidence>
<evidence type="ECO:0000256" key="2">
    <source>
        <dbReference type="SAM" id="MobiDB-lite"/>
    </source>
</evidence>
<evidence type="ECO:0000305" key="3"/>
<gene>
    <name type="primary">Sprr3</name>
</gene>
<keyword id="KW-0007">Acetylation</keyword>
<keyword id="KW-0963">Cytoplasm</keyword>
<keyword id="KW-0417">Keratinization</keyword>
<keyword id="KW-1185">Reference proteome</keyword>
<keyword id="KW-0677">Repeat</keyword>
<sequence length="238" mass="25241">MSSYQQKQPFVPPPQPEQHQVKQPCQPPPQGKFVPIATSEPCHTDVPQPGNTKIPEPCSTKVPEPGNTVVLEPDYTTMPGPCSTNITEPDYTTIPGPCSTNITEPDYTTIPGPCSTNIPGPDRTVVPGSCSTNITEPDYTTIPGPSSTKIPDPGCAMVPGPSPSSTSEPSSEPCSINVREPGYMNASEPTHAKVPDQGYTKIPDQGSSKVPEPCQSRVPEVCPPTVTPVSAKQKTKQK</sequence>
<comment type="function">
    <text>Cross-linked envelope protein of keratinocytes.</text>
</comment>
<comment type="subcellular location">
    <subcellularLocation>
        <location>Cytoplasm</location>
    </subcellularLocation>
</comment>
<comment type="similarity">
    <text evidence="3">Belongs to the cornifin (SPRR) family.</text>
</comment>
<organism>
    <name type="scientific">Mus musculus</name>
    <name type="common">Mouse</name>
    <dbReference type="NCBI Taxonomy" id="10090"/>
    <lineage>
        <taxon>Eukaryota</taxon>
        <taxon>Metazoa</taxon>
        <taxon>Chordata</taxon>
        <taxon>Craniata</taxon>
        <taxon>Vertebrata</taxon>
        <taxon>Euteleostomi</taxon>
        <taxon>Mammalia</taxon>
        <taxon>Eutheria</taxon>
        <taxon>Euarchontoglires</taxon>
        <taxon>Glires</taxon>
        <taxon>Rodentia</taxon>
        <taxon>Myomorpha</taxon>
        <taxon>Muroidea</taxon>
        <taxon>Muridae</taxon>
        <taxon>Murinae</taxon>
        <taxon>Mus</taxon>
        <taxon>Mus</taxon>
    </lineage>
</organism>
<protein>
    <recommendedName>
        <fullName>Small proline-rich protein 3</fullName>
    </recommendedName>
    <alternativeName>
        <fullName>Cornifin beta</fullName>
    </alternativeName>
</protein>
<accession>O09116</accession>
<accession>Q059J8</accession>
<feature type="initiator methionine" description="Removed" evidence="1">
    <location>
        <position position="1"/>
    </location>
</feature>
<feature type="chain" id="PRO_0000150004" description="Small proline-rich protein 3">
    <location>
        <begin position="2"/>
        <end position="238"/>
    </location>
</feature>
<feature type="repeat" description="1">
    <location>
        <begin position="52"/>
        <end position="59"/>
    </location>
</feature>
<feature type="repeat" description="2">
    <location>
        <begin position="60"/>
        <end position="67"/>
    </location>
</feature>
<feature type="repeat" description="3">
    <location>
        <begin position="68"/>
        <end position="75"/>
    </location>
</feature>
<feature type="repeat" description="4">
    <location>
        <begin position="76"/>
        <end position="83"/>
    </location>
</feature>
<feature type="repeat" description="5">
    <location>
        <begin position="84"/>
        <end position="91"/>
    </location>
</feature>
<feature type="repeat" description="6">
    <location>
        <begin position="92"/>
        <end position="99"/>
    </location>
</feature>
<feature type="repeat" description="7">
    <location>
        <begin position="100"/>
        <end position="107"/>
    </location>
</feature>
<feature type="repeat" description="8">
    <location>
        <begin position="108"/>
        <end position="115"/>
    </location>
</feature>
<feature type="repeat" description="9">
    <location>
        <begin position="116"/>
        <end position="123"/>
    </location>
</feature>
<feature type="repeat" description="10">
    <location>
        <begin position="124"/>
        <end position="131"/>
    </location>
</feature>
<feature type="repeat" description="11">
    <location>
        <begin position="132"/>
        <end position="139"/>
    </location>
</feature>
<feature type="repeat" description="12">
    <location>
        <begin position="140"/>
        <end position="147"/>
    </location>
</feature>
<feature type="repeat" description="13">
    <location>
        <begin position="148"/>
        <end position="155"/>
    </location>
</feature>
<feature type="repeat" description="14">
    <location>
        <begin position="156"/>
        <end position="163"/>
    </location>
</feature>
<feature type="repeat" description="15">
    <location>
        <begin position="164"/>
        <end position="175"/>
    </location>
</feature>
<feature type="repeat" description="16">
    <location>
        <begin position="176"/>
        <end position="183"/>
    </location>
</feature>
<feature type="repeat" description="17">
    <location>
        <begin position="184"/>
        <end position="191"/>
    </location>
</feature>
<feature type="repeat" description="18">
    <location>
        <begin position="192"/>
        <end position="199"/>
    </location>
</feature>
<feature type="repeat" description="19">
    <location>
        <begin position="200"/>
        <end position="207"/>
    </location>
</feature>
<feature type="repeat" description="20">
    <location>
        <begin position="208"/>
        <end position="215"/>
    </location>
</feature>
<feature type="repeat" description="21">
    <location>
        <begin position="216"/>
        <end position="223"/>
    </location>
</feature>
<feature type="region of interest" description="Disordered" evidence="2">
    <location>
        <begin position="1"/>
        <end position="67"/>
    </location>
</feature>
<feature type="region of interest" description="21 X 8 AA approximate tandem repeats">
    <location>
        <begin position="52"/>
        <end position="223"/>
    </location>
</feature>
<feature type="region of interest" description="Disordered" evidence="2">
    <location>
        <begin position="110"/>
        <end position="238"/>
    </location>
</feature>
<feature type="compositionally biased region" description="Low complexity" evidence="2">
    <location>
        <begin position="163"/>
        <end position="175"/>
    </location>
</feature>
<feature type="modified residue" description="N-acetylserine" evidence="1">
    <location>
        <position position="2"/>
    </location>
</feature>
<proteinExistence type="evidence at transcript level"/>